<protein>
    <recommendedName>
        <fullName>Putative pumilio homolog 22</fullName>
        <shortName>APUM-22</shortName>
        <shortName>AtPUM22</shortName>
    </recommendedName>
</protein>
<evidence type="ECO:0000250" key="1"/>
<evidence type="ECO:0000255" key="2">
    <source>
        <dbReference type="PROSITE-ProRule" id="PRU00318"/>
    </source>
</evidence>
<evidence type="ECO:0000305" key="3"/>
<accession>Q9LNI2</accession>
<organism>
    <name type="scientific">Arabidopsis thaliana</name>
    <name type="common">Mouse-ear cress</name>
    <dbReference type="NCBI Taxonomy" id="3702"/>
    <lineage>
        <taxon>Eukaryota</taxon>
        <taxon>Viridiplantae</taxon>
        <taxon>Streptophyta</taxon>
        <taxon>Embryophyta</taxon>
        <taxon>Tracheophyta</taxon>
        <taxon>Spermatophyta</taxon>
        <taxon>Magnoliopsida</taxon>
        <taxon>eudicotyledons</taxon>
        <taxon>Gunneridae</taxon>
        <taxon>Pentapetalae</taxon>
        <taxon>rosids</taxon>
        <taxon>malvids</taxon>
        <taxon>Brassicales</taxon>
        <taxon>Brassicaceae</taxon>
        <taxon>Camelineae</taxon>
        <taxon>Arabidopsis</taxon>
    </lineage>
</organism>
<feature type="chain" id="PRO_0000401404" description="Putative pumilio homolog 22">
    <location>
        <begin position="1"/>
        <end position="361"/>
    </location>
</feature>
<feature type="domain" description="PUM-HD" evidence="2">
    <location>
        <begin position="5"/>
        <end position="348"/>
    </location>
</feature>
<feature type="repeat" description="Pumilio 1">
    <location>
        <begin position="27"/>
        <end position="63"/>
    </location>
</feature>
<feature type="repeat" description="Pumilio 2">
    <location>
        <begin position="64"/>
        <end position="103"/>
    </location>
</feature>
<feature type="repeat" description="Pumilio 3; degenerate">
    <location>
        <begin position="104"/>
        <end position="131"/>
    </location>
</feature>
<feature type="repeat" description="Pumilio 4">
    <location>
        <begin position="132"/>
        <end position="167"/>
    </location>
</feature>
<feature type="repeat" description="Pumilio 5; degenerate">
    <location>
        <begin position="168"/>
        <end position="205"/>
    </location>
</feature>
<feature type="repeat" description="Pumilio 6; degenerate">
    <location>
        <begin position="206"/>
        <end position="243"/>
    </location>
</feature>
<feature type="repeat" description="Pumilio 7">
    <location>
        <begin position="244"/>
        <end position="284"/>
    </location>
</feature>
<feature type="repeat" description="Pumilio 8">
    <location>
        <begin position="285"/>
        <end position="319"/>
    </location>
</feature>
<comment type="function">
    <text evidence="1">Sequence-specific RNA-binding protein that regulates translation and mRNA stability by binding the 3'-UTR of target mRNAs.</text>
</comment>
<comment type="subcellular location">
    <subcellularLocation>
        <location evidence="3">Cytoplasm</location>
    </subcellularLocation>
</comment>
<comment type="domain">
    <text evidence="1">The pumilio repeats mediate the association with RNA by packing together to form a right-handed superhelix that approximates a half donut. The number as well as the specific sequence of the repeats determine the specificity for target mRNAs (By similarity).</text>
</comment>
<keyword id="KW-0963">Cytoplasm</keyword>
<keyword id="KW-1185">Reference proteome</keyword>
<keyword id="KW-0677">Repeat</keyword>
<keyword id="KW-0694">RNA-binding</keyword>
<keyword id="KW-0810">Translation regulation</keyword>
<proteinExistence type="inferred from homology"/>
<reference key="1">
    <citation type="journal article" date="2000" name="Nature">
        <title>Sequence and analysis of chromosome 1 of the plant Arabidopsis thaliana.</title>
        <authorList>
            <person name="Theologis A."/>
            <person name="Ecker J.R."/>
            <person name="Palm C.J."/>
            <person name="Federspiel N.A."/>
            <person name="Kaul S."/>
            <person name="White O."/>
            <person name="Alonso J."/>
            <person name="Altafi H."/>
            <person name="Araujo R."/>
            <person name="Bowman C.L."/>
            <person name="Brooks S.Y."/>
            <person name="Buehler E."/>
            <person name="Chan A."/>
            <person name="Chao Q."/>
            <person name="Chen H."/>
            <person name="Cheuk R.F."/>
            <person name="Chin C.W."/>
            <person name="Chung M.K."/>
            <person name="Conn L."/>
            <person name="Conway A.B."/>
            <person name="Conway A.R."/>
            <person name="Creasy T.H."/>
            <person name="Dewar K."/>
            <person name="Dunn P."/>
            <person name="Etgu P."/>
            <person name="Feldblyum T.V."/>
            <person name="Feng J.-D."/>
            <person name="Fong B."/>
            <person name="Fujii C.Y."/>
            <person name="Gill J.E."/>
            <person name="Goldsmith A.D."/>
            <person name="Haas B."/>
            <person name="Hansen N.F."/>
            <person name="Hughes B."/>
            <person name="Huizar L."/>
            <person name="Hunter J.L."/>
            <person name="Jenkins J."/>
            <person name="Johnson-Hopson C."/>
            <person name="Khan S."/>
            <person name="Khaykin E."/>
            <person name="Kim C.J."/>
            <person name="Koo H.L."/>
            <person name="Kremenetskaia I."/>
            <person name="Kurtz D.B."/>
            <person name="Kwan A."/>
            <person name="Lam B."/>
            <person name="Langin-Hooper S."/>
            <person name="Lee A."/>
            <person name="Lee J.M."/>
            <person name="Lenz C.A."/>
            <person name="Li J.H."/>
            <person name="Li Y.-P."/>
            <person name="Lin X."/>
            <person name="Liu S.X."/>
            <person name="Liu Z.A."/>
            <person name="Luros J.S."/>
            <person name="Maiti R."/>
            <person name="Marziali A."/>
            <person name="Militscher J."/>
            <person name="Miranda M."/>
            <person name="Nguyen M."/>
            <person name="Nierman W.C."/>
            <person name="Osborne B.I."/>
            <person name="Pai G."/>
            <person name="Peterson J."/>
            <person name="Pham P.K."/>
            <person name="Rizzo M."/>
            <person name="Rooney T."/>
            <person name="Rowley D."/>
            <person name="Sakano H."/>
            <person name="Salzberg S.L."/>
            <person name="Schwartz J.R."/>
            <person name="Shinn P."/>
            <person name="Southwick A.M."/>
            <person name="Sun H."/>
            <person name="Tallon L.J."/>
            <person name="Tambunga G."/>
            <person name="Toriumi M.J."/>
            <person name="Town C.D."/>
            <person name="Utterback T."/>
            <person name="Van Aken S."/>
            <person name="Vaysberg M."/>
            <person name="Vysotskaia V.S."/>
            <person name="Walker M."/>
            <person name="Wu D."/>
            <person name="Yu G."/>
            <person name="Fraser C.M."/>
            <person name="Venter J.C."/>
            <person name="Davis R.W."/>
        </authorList>
    </citation>
    <scope>NUCLEOTIDE SEQUENCE [LARGE SCALE GENOMIC DNA]</scope>
    <source>
        <strain>cv. Columbia</strain>
    </source>
</reference>
<reference key="2">
    <citation type="journal article" date="2017" name="Plant J.">
        <title>Araport11: a complete reannotation of the Arabidopsis thaliana reference genome.</title>
        <authorList>
            <person name="Cheng C.Y."/>
            <person name="Krishnakumar V."/>
            <person name="Chan A.P."/>
            <person name="Thibaud-Nissen F."/>
            <person name="Schobel S."/>
            <person name="Town C.D."/>
        </authorList>
    </citation>
    <scope>GENOME REANNOTATION</scope>
    <source>
        <strain>cv. Columbia</strain>
    </source>
</reference>
<reference key="3">
    <citation type="journal article" date="2009" name="FEBS J.">
        <title>Molecular characterization of Arabidopsis thaliana PUF proteins -- binding specificity and target candidates.</title>
        <authorList>
            <person name="Francischini C.W."/>
            <person name="Quaggio R.B."/>
        </authorList>
    </citation>
    <scope>GENE FAMILY</scope>
</reference>
<reference key="4">
    <citation type="journal article" date="2010" name="BMC Plant Biol.">
        <title>The Puf family of RNA-binding proteins in plants: phylogeny, structural modeling, activity and subcellular localization.</title>
        <authorList>
            <person name="Tam P.P."/>
            <person name="Barrette-Ng I.H."/>
            <person name="Simon D.M."/>
            <person name="Tam M.W."/>
            <person name="Ang A.L."/>
            <person name="Muench D.G."/>
        </authorList>
    </citation>
    <scope>GENE FAMILY</scope>
</reference>
<dbReference type="EMBL" id="AC023628">
    <property type="protein sequence ID" value="AAF97334.1"/>
    <property type="molecule type" value="Genomic_DNA"/>
</dbReference>
<dbReference type="EMBL" id="CP002684">
    <property type="protein sequence ID" value="AEE27283.1"/>
    <property type="molecule type" value="Genomic_DNA"/>
</dbReference>
<dbReference type="PIR" id="F86144">
    <property type="entry name" value="F86144"/>
</dbReference>
<dbReference type="RefSeq" id="NP_171648.1">
    <property type="nucleotide sequence ID" value="NM_100023.1"/>
</dbReference>
<dbReference type="SMR" id="Q9LNI2"/>
<dbReference type="STRING" id="3702.Q9LNI2"/>
<dbReference type="PaxDb" id="3702-AT1G01410.1"/>
<dbReference type="EnsemblPlants" id="AT1G01410.1">
    <property type="protein sequence ID" value="AT1G01410.1"/>
    <property type="gene ID" value="AT1G01410"/>
</dbReference>
<dbReference type="GeneID" id="837547"/>
<dbReference type="Gramene" id="AT1G01410.1">
    <property type="protein sequence ID" value="AT1G01410.1"/>
    <property type="gene ID" value="AT1G01410"/>
</dbReference>
<dbReference type="KEGG" id="ath:AT1G01410"/>
<dbReference type="Araport" id="AT1G01410"/>
<dbReference type="TAIR" id="AT1G01410">
    <property type="gene designation" value="PUM22"/>
</dbReference>
<dbReference type="eggNOG" id="KOG2049">
    <property type="taxonomic scope" value="Eukaryota"/>
</dbReference>
<dbReference type="HOGENOM" id="CLU_048501_2_0_1"/>
<dbReference type="InParanoid" id="Q9LNI2"/>
<dbReference type="OMA" id="HHKKLFC"/>
<dbReference type="PhylomeDB" id="Q9LNI2"/>
<dbReference type="PRO" id="PR:Q9LNI2"/>
<dbReference type="Proteomes" id="UP000006548">
    <property type="component" value="Chromosome 1"/>
</dbReference>
<dbReference type="ExpressionAtlas" id="Q9LNI2">
    <property type="expression patterns" value="baseline and differential"/>
</dbReference>
<dbReference type="GO" id="GO:0005737">
    <property type="term" value="C:cytoplasm"/>
    <property type="evidence" value="ECO:0007669"/>
    <property type="project" value="UniProtKB-SubCell"/>
</dbReference>
<dbReference type="GO" id="GO:0003723">
    <property type="term" value="F:RNA binding"/>
    <property type="evidence" value="ECO:0007669"/>
    <property type="project" value="UniProtKB-KW"/>
</dbReference>
<dbReference type="GO" id="GO:0006417">
    <property type="term" value="P:regulation of translation"/>
    <property type="evidence" value="ECO:0007669"/>
    <property type="project" value="UniProtKB-KW"/>
</dbReference>
<dbReference type="Gene3D" id="1.25.10.10">
    <property type="entry name" value="Leucine-rich Repeat Variant"/>
    <property type="match status" value="2"/>
</dbReference>
<dbReference type="InterPro" id="IPR011989">
    <property type="entry name" value="ARM-like"/>
</dbReference>
<dbReference type="InterPro" id="IPR016024">
    <property type="entry name" value="ARM-type_fold"/>
</dbReference>
<dbReference type="InterPro" id="IPR033133">
    <property type="entry name" value="PUM-HD"/>
</dbReference>
<dbReference type="InterPro" id="IPR001313">
    <property type="entry name" value="Pumilio_RNA-bd_rpt"/>
</dbReference>
<dbReference type="PANTHER" id="PTHR12537:SF173">
    <property type="entry name" value="PUMILIO HOMOLOG 26-RELATED"/>
    <property type="match status" value="1"/>
</dbReference>
<dbReference type="PANTHER" id="PTHR12537">
    <property type="entry name" value="RNA BINDING PROTEIN PUMILIO-RELATED"/>
    <property type="match status" value="1"/>
</dbReference>
<dbReference type="SMART" id="SM00025">
    <property type="entry name" value="Pumilio"/>
    <property type="match status" value="3"/>
</dbReference>
<dbReference type="SUPFAM" id="SSF48371">
    <property type="entry name" value="ARM repeat"/>
    <property type="match status" value="1"/>
</dbReference>
<dbReference type="PROSITE" id="PS50302">
    <property type="entry name" value="PUM"/>
    <property type="match status" value="5"/>
</dbReference>
<dbReference type="PROSITE" id="PS50303">
    <property type="entry name" value="PUM_HD"/>
    <property type="match status" value="1"/>
</dbReference>
<name>PUM22_ARATH</name>
<gene>
    <name type="primary">APUM22</name>
    <name type="ordered locus">At1g01410</name>
    <name type="ORF">F6F3.21</name>
</gene>
<sequence length="361" mass="41255">MTHERGYDLASQVLNICNVHHKKLFCHITYRHLLVLSSDDNGCVILKKVITIADDFLKDEFLDLIAQHAHSLSMHDLGISLIQHVLELDFTKKTTQDDKRLHELMAEFDEVLSTSVTADVDKLHKLASKLMLDSDLFFEFVITRRGSLMIQIILGKSEEVDQVILAGVKQRFIDVTTNFYGYRIMIQTIKVFKKRGDLKVYDQILRLIGVHALYLTKDPDMGNKTFQHAINLHHQDCTTFIACGLQSHYIELSFLKHGSKIVEMLIDDRISMVPLVLLMMEIVKCDEDTLVRLATDEYGNNILKKFLALAKEHKEDFFGDLVDKLNPLLDSLRGTLGENIVAIIDSETEMVKDRIVSQGNN</sequence>